<sequence>MQLFHLCLIISCSCPTVQASKLCLGWL</sequence>
<name>HBEAG_HBVB6</name>
<reference key="1">
    <citation type="journal article" date="1996" name="J. Viral Hepat.">
        <title>Whole genome analysis of hepatitis B virus from four cases of fulminant hepatitis: genetic variability and its potential role in disease pathogenicity.</title>
        <authorList>
            <person name="Alexopoulou A."/>
            <person name="Karayiannis P."/>
            <person name="Hadziyannis S.J."/>
        </authorList>
    </citation>
    <scope>NUCLEOTIDE SEQUENCE [GENOMIC DNA]</scope>
</reference>
<gene>
    <name type="primary">C</name>
</gene>
<proteinExistence type="predicted"/>
<dbReference type="EMBL" id="X97850">
    <property type="protein sequence ID" value="CAA66439.1"/>
    <property type="molecule type" value="Genomic_DNA"/>
</dbReference>
<dbReference type="Proteomes" id="UP000007917">
    <property type="component" value="Genome"/>
</dbReference>
<dbReference type="GO" id="GO:0005198">
    <property type="term" value="F:structural molecule activity"/>
    <property type="evidence" value="ECO:0007669"/>
    <property type="project" value="InterPro"/>
</dbReference>
<dbReference type="InterPro" id="IPR013195">
    <property type="entry name" value="Hepatitis_B_virus_capsid_N"/>
</dbReference>
<dbReference type="Pfam" id="PF08290">
    <property type="entry name" value="Hep_core_N"/>
    <property type="match status" value="1"/>
</dbReference>
<keyword id="KW-0024">Alternative initiation</keyword>
<organism>
    <name type="scientific">Hepatitis B virus genotype B2 subtype adw (isolate China/patient4/1996)</name>
    <name type="common">HBV-B</name>
    <dbReference type="NCBI Taxonomy" id="489463"/>
    <lineage>
        <taxon>Viruses</taxon>
        <taxon>Riboviria</taxon>
        <taxon>Pararnavirae</taxon>
        <taxon>Artverviricota</taxon>
        <taxon>Revtraviricetes</taxon>
        <taxon>Blubervirales</taxon>
        <taxon>Hepadnaviridae</taxon>
        <taxon>Orthohepadnavirus</taxon>
        <taxon>Hepatitis B virus</taxon>
    </lineage>
</organism>
<accession>P0C6H0</accession>
<accession>Q76QH2</accession>
<organismHost>
    <name type="scientific">Homo sapiens</name>
    <name type="common">Human</name>
    <dbReference type="NCBI Taxonomy" id="9606"/>
</organismHost>
<organismHost>
    <name type="scientific">Pan troglodytes</name>
    <name type="common">Chimpanzee</name>
    <dbReference type="NCBI Taxonomy" id="9598"/>
</organismHost>
<protein>
    <recommendedName>
        <fullName>Truncated HBeAg protein</fullName>
    </recommendedName>
</protein>
<feature type="chain" id="PRO_0000324709" description="Truncated HBeAg protein">
    <location>
        <begin position="1"/>
        <end position="27"/>
    </location>
</feature>
<comment type="alternative products">
    <event type="alternative initiation"/>
    <isoform>
        <id>P0C6H0-1</id>
        <name>External core antigen</name>
        <sequence type="displayed"/>
    </isoform>
    <isoform>
        <id>Q67924-1</id>
        <name>Capsid protein</name>
        <sequence type="external"/>
    </isoform>
</comment>
<comment type="miscellaneous">
    <text>This virus has been isolated from a patient with fulminant hepatitis. A genomic mutation in 1898 creates a stop codon at position 28 of HBeAg, without affecting the capsid open reading frame. The HBeAg negative variants of HBV are associated with fulminant hepatitis, but can also be found in patients with persistent infection and chronic hepatitis.</text>
</comment>